<reference key="1">
    <citation type="journal article" date="2005" name="Science">
        <title>The transcriptional landscape of the mammalian genome.</title>
        <authorList>
            <person name="Carninci P."/>
            <person name="Kasukawa T."/>
            <person name="Katayama S."/>
            <person name="Gough J."/>
            <person name="Frith M.C."/>
            <person name="Maeda N."/>
            <person name="Oyama R."/>
            <person name="Ravasi T."/>
            <person name="Lenhard B."/>
            <person name="Wells C."/>
            <person name="Kodzius R."/>
            <person name="Shimokawa K."/>
            <person name="Bajic V.B."/>
            <person name="Brenner S.E."/>
            <person name="Batalov S."/>
            <person name="Forrest A.R."/>
            <person name="Zavolan M."/>
            <person name="Davis M.J."/>
            <person name="Wilming L.G."/>
            <person name="Aidinis V."/>
            <person name="Allen J.E."/>
            <person name="Ambesi-Impiombato A."/>
            <person name="Apweiler R."/>
            <person name="Aturaliya R.N."/>
            <person name="Bailey T.L."/>
            <person name="Bansal M."/>
            <person name="Baxter L."/>
            <person name="Beisel K.W."/>
            <person name="Bersano T."/>
            <person name="Bono H."/>
            <person name="Chalk A.M."/>
            <person name="Chiu K.P."/>
            <person name="Choudhary V."/>
            <person name="Christoffels A."/>
            <person name="Clutterbuck D.R."/>
            <person name="Crowe M.L."/>
            <person name="Dalla E."/>
            <person name="Dalrymple B.P."/>
            <person name="de Bono B."/>
            <person name="Della Gatta G."/>
            <person name="di Bernardo D."/>
            <person name="Down T."/>
            <person name="Engstrom P."/>
            <person name="Fagiolini M."/>
            <person name="Faulkner G."/>
            <person name="Fletcher C.F."/>
            <person name="Fukushima T."/>
            <person name="Furuno M."/>
            <person name="Futaki S."/>
            <person name="Gariboldi M."/>
            <person name="Georgii-Hemming P."/>
            <person name="Gingeras T.R."/>
            <person name="Gojobori T."/>
            <person name="Green R.E."/>
            <person name="Gustincich S."/>
            <person name="Harbers M."/>
            <person name="Hayashi Y."/>
            <person name="Hensch T.K."/>
            <person name="Hirokawa N."/>
            <person name="Hill D."/>
            <person name="Huminiecki L."/>
            <person name="Iacono M."/>
            <person name="Ikeo K."/>
            <person name="Iwama A."/>
            <person name="Ishikawa T."/>
            <person name="Jakt M."/>
            <person name="Kanapin A."/>
            <person name="Katoh M."/>
            <person name="Kawasawa Y."/>
            <person name="Kelso J."/>
            <person name="Kitamura H."/>
            <person name="Kitano H."/>
            <person name="Kollias G."/>
            <person name="Krishnan S.P."/>
            <person name="Kruger A."/>
            <person name="Kummerfeld S.K."/>
            <person name="Kurochkin I.V."/>
            <person name="Lareau L.F."/>
            <person name="Lazarevic D."/>
            <person name="Lipovich L."/>
            <person name="Liu J."/>
            <person name="Liuni S."/>
            <person name="McWilliam S."/>
            <person name="Madan Babu M."/>
            <person name="Madera M."/>
            <person name="Marchionni L."/>
            <person name="Matsuda H."/>
            <person name="Matsuzawa S."/>
            <person name="Miki H."/>
            <person name="Mignone F."/>
            <person name="Miyake S."/>
            <person name="Morris K."/>
            <person name="Mottagui-Tabar S."/>
            <person name="Mulder N."/>
            <person name="Nakano N."/>
            <person name="Nakauchi H."/>
            <person name="Ng P."/>
            <person name="Nilsson R."/>
            <person name="Nishiguchi S."/>
            <person name="Nishikawa S."/>
            <person name="Nori F."/>
            <person name="Ohara O."/>
            <person name="Okazaki Y."/>
            <person name="Orlando V."/>
            <person name="Pang K.C."/>
            <person name="Pavan W.J."/>
            <person name="Pavesi G."/>
            <person name="Pesole G."/>
            <person name="Petrovsky N."/>
            <person name="Piazza S."/>
            <person name="Reed J."/>
            <person name="Reid J.F."/>
            <person name="Ring B.Z."/>
            <person name="Ringwald M."/>
            <person name="Rost B."/>
            <person name="Ruan Y."/>
            <person name="Salzberg S.L."/>
            <person name="Sandelin A."/>
            <person name="Schneider C."/>
            <person name="Schoenbach C."/>
            <person name="Sekiguchi K."/>
            <person name="Semple C.A."/>
            <person name="Seno S."/>
            <person name="Sessa L."/>
            <person name="Sheng Y."/>
            <person name="Shibata Y."/>
            <person name="Shimada H."/>
            <person name="Shimada K."/>
            <person name="Silva D."/>
            <person name="Sinclair B."/>
            <person name="Sperling S."/>
            <person name="Stupka E."/>
            <person name="Sugiura K."/>
            <person name="Sultana R."/>
            <person name="Takenaka Y."/>
            <person name="Taki K."/>
            <person name="Tammoja K."/>
            <person name="Tan S.L."/>
            <person name="Tang S."/>
            <person name="Taylor M.S."/>
            <person name="Tegner J."/>
            <person name="Teichmann S.A."/>
            <person name="Ueda H.R."/>
            <person name="van Nimwegen E."/>
            <person name="Verardo R."/>
            <person name="Wei C.L."/>
            <person name="Yagi K."/>
            <person name="Yamanishi H."/>
            <person name="Zabarovsky E."/>
            <person name="Zhu S."/>
            <person name="Zimmer A."/>
            <person name="Hide W."/>
            <person name="Bult C."/>
            <person name="Grimmond S.M."/>
            <person name="Teasdale R.D."/>
            <person name="Liu E.T."/>
            <person name="Brusic V."/>
            <person name="Quackenbush J."/>
            <person name="Wahlestedt C."/>
            <person name="Mattick J.S."/>
            <person name="Hume D.A."/>
            <person name="Kai C."/>
            <person name="Sasaki D."/>
            <person name="Tomaru Y."/>
            <person name="Fukuda S."/>
            <person name="Kanamori-Katayama M."/>
            <person name="Suzuki M."/>
            <person name="Aoki J."/>
            <person name="Arakawa T."/>
            <person name="Iida J."/>
            <person name="Imamura K."/>
            <person name="Itoh M."/>
            <person name="Kato T."/>
            <person name="Kawaji H."/>
            <person name="Kawagashira N."/>
            <person name="Kawashima T."/>
            <person name="Kojima M."/>
            <person name="Kondo S."/>
            <person name="Konno H."/>
            <person name="Nakano K."/>
            <person name="Ninomiya N."/>
            <person name="Nishio T."/>
            <person name="Okada M."/>
            <person name="Plessy C."/>
            <person name="Shibata K."/>
            <person name="Shiraki T."/>
            <person name="Suzuki S."/>
            <person name="Tagami M."/>
            <person name="Waki K."/>
            <person name="Watahiki A."/>
            <person name="Okamura-Oho Y."/>
            <person name="Suzuki H."/>
            <person name="Kawai J."/>
            <person name="Hayashizaki Y."/>
        </authorList>
    </citation>
    <scope>NUCLEOTIDE SEQUENCE [LARGE SCALE MRNA]</scope>
    <source>
        <strain>C57BL/6J</strain>
        <strain>NOD</strain>
        <tissue>Embryo</tissue>
        <tissue>Head</tissue>
        <tissue>Liver</tissue>
        <tissue>Skin</tissue>
        <tissue>Visual cortex</tissue>
    </source>
</reference>
<reference key="2">
    <citation type="journal article" date="2004" name="Genome Res.">
        <title>The status, quality, and expansion of the NIH full-length cDNA project: the Mammalian Gene Collection (MGC).</title>
        <authorList>
            <consortium name="The MGC Project Team"/>
        </authorList>
    </citation>
    <scope>NUCLEOTIDE SEQUENCE [LARGE SCALE MRNA]</scope>
    <source>
        <tissue>Olfactory epithelium</tissue>
    </source>
</reference>
<protein>
    <recommendedName>
        <fullName>Transmembrane protein 184B</fullName>
    </recommendedName>
</protein>
<comment type="function">
    <text evidence="1">May activate the MAP kinase signaling pathway.</text>
</comment>
<comment type="subcellular location">
    <subcellularLocation>
        <location evidence="5">Membrane</location>
        <topology evidence="5">Multi-pass membrane protein</topology>
    </subcellularLocation>
</comment>
<comment type="similarity">
    <text evidence="5">Belongs to the TMEM184 family.</text>
</comment>
<accession>Q8BG09</accession>
<accession>Q3TY97</accession>
<accession>Q8BJ02</accession>
<sequence length="407" mass="45589">MTVRGAALAPDPASPTTTTASPSVSATPEGSPTAMEHPVFLMTTAAQAISGFFVWTALLITCHQIYMHLRCYSRPNEQRHIVRILFIVPIYAFDSWLSLLFFTNDQYYVYFGTVRDCYEAFVIYNFLSLCYEYLGGESAIMSEIRGKAIESSCMYGTCCLWGKTYSIGFLRFCKQATLQFCVVKPLMAVSTVILQAFGKYRDGDFDVTSGYLYVTIIYNISVSLALYALFLFYFATRELLSPYSPVLKFFMVKSVIFLSFWQGMLLAILEKCGAIPKINSARVSVGEGTVAAGYQDFIICVEMFFAALALRHAFTYKVYADKRLDAQGRCAPMKSISSSLKETMNPHDIVQDAIHNFSPAYQQYTQQSTLEPGPTWRGGTHSLSRSHSLSGARDNEKTLLLSSDDEF</sequence>
<proteinExistence type="evidence at transcript level"/>
<dbReference type="EMBL" id="AK028196">
    <property type="protein sequence ID" value="BAC25805.1"/>
    <property type="molecule type" value="mRNA"/>
</dbReference>
<dbReference type="EMBL" id="AK029129">
    <property type="protein sequence ID" value="BAC26312.1"/>
    <property type="molecule type" value="mRNA"/>
</dbReference>
<dbReference type="EMBL" id="AK048138">
    <property type="protein sequence ID" value="BAC33254.1"/>
    <property type="molecule type" value="mRNA"/>
</dbReference>
<dbReference type="EMBL" id="AK149366">
    <property type="protein sequence ID" value="BAE28837.1"/>
    <property type="molecule type" value="mRNA"/>
</dbReference>
<dbReference type="EMBL" id="AK158789">
    <property type="protein sequence ID" value="BAE34666.1"/>
    <property type="molecule type" value="mRNA"/>
</dbReference>
<dbReference type="EMBL" id="AK170086">
    <property type="protein sequence ID" value="BAE41556.1"/>
    <property type="molecule type" value="mRNA"/>
</dbReference>
<dbReference type="EMBL" id="BC046959">
    <property type="protein sequence ID" value="AAH46959.1"/>
    <property type="molecule type" value="mRNA"/>
</dbReference>
<dbReference type="CCDS" id="CCDS27639.1"/>
<dbReference type="RefSeq" id="NP_001240746.1">
    <property type="nucleotide sequence ID" value="NM_001253817.1"/>
</dbReference>
<dbReference type="RefSeq" id="NP_001240748.1">
    <property type="nucleotide sequence ID" value="NM_001253819.1"/>
</dbReference>
<dbReference type="RefSeq" id="NP_001240749.1">
    <property type="nucleotide sequence ID" value="NM_001253820.1"/>
</dbReference>
<dbReference type="RefSeq" id="NP_766196.1">
    <property type="nucleotide sequence ID" value="NM_172608.1"/>
</dbReference>
<dbReference type="RefSeq" id="XP_036015246.1">
    <property type="nucleotide sequence ID" value="XM_036159353.1"/>
</dbReference>
<dbReference type="FunCoup" id="Q8BG09">
    <property type="interactions" value="1921"/>
</dbReference>
<dbReference type="STRING" id="10090.ENSMUSP00000074518"/>
<dbReference type="iPTMnet" id="Q8BG09"/>
<dbReference type="PhosphoSitePlus" id="Q8BG09"/>
<dbReference type="SwissPalm" id="Q8BG09"/>
<dbReference type="jPOST" id="Q8BG09"/>
<dbReference type="PaxDb" id="10090-ENSMUSP00000074518"/>
<dbReference type="PeptideAtlas" id="Q8BG09"/>
<dbReference type="ProteomicsDB" id="254528"/>
<dbReference type="Antibodypedia" id="12345">
    <property type="antibodies" value="88 antibodies from 29 providers"/>
</dbReference>
<dbReference type="Ensembl" id="ENSMUST00000074991.10">
    <property type="protein sequence ID" value="ENSMUSP00000074518.3"/>
    <property type="gene ID" value="ENSMUSG00000009035.16"/>
</dbReference>
<dbReference type="Ensembl" id="ENSMUST00000178522.3">
    <property type="protein sequence ID" value="ENSMUSP00000136416.2"/>
    <property type="gene ID" value="ENSMUSG00000009035.16"/>
</dbReference>
<dbReference type="GeneID" id="223693"/>
<dbReference type="KEGG" id="mmu:223693"/>
<dbReference type="UCSC" id="uc007wti.1">
    <property type="organism name" value="mouse"/>
</dbReference>
<dbReference type="AGR" id="MGI:2445179"/>
<dbReference type="CTD" id="25829"/>
<dbReference type="MGI" id="MGI:2445179">
    <property type="gene designation" value="Tmem184b"/>
</dbReference>
<dbReference type="VEuPathDB" id="HostDB:ENSMUSG00000009035"/>
<dbReference type="eggNOG" id="KOG2641">
    <property type="taxonomic scope" value="Eukaryota"/>
</dbReference>
<dbReference type="GeneTree" id="ENSGT00940000153861"/>
<dbReference type="HOGENOM" id="CLU_012923_3_0_1"/>
<dbReference type="InParanoid" id="Q8BG09"/>
<dbReference type="OMA" id="IIKPIMA"/>
<dbReference type="OrthoDB" id="5348404at2759"/>
<dbReference type="PhylomeDB" id="Q8BG09"/>
<dbReference type="TreeFam" id="TF314160"/>
<dbReference type="BioGRID-ORCS" id="223693">
    <property type="hits" value="2 hits in 77 CRISPR screens"/>
</dbReference>
<dbReference type="ChiTaRS" id="Tmem184b">
    <property type="organism name" value="mouse"/>
</dbReference>
<dbReference type="PRO" id="PR:Q8BG09"/>
<dbReference type="Proteomes" id="UP000000589">
    <property type="component" value="Chromosome 15"/>
</dbReference>
<dbReference type="RNAct" id="Q8BG09">
    <property type="molecule type" value="protein"/>
</dbReference>
<dbReference type="Bgee" id="ENSMUSG00000009035">
    <property type="expression patterns" value="Expressed in dorsal pancreas and 237 other cell types or tissues"/>
</dbReference>
<dbReference type="ExpressionAtlas" id="Q8BG09">
    <property type="expression patterns" value="baseline and differential"/>
</dbReference>
<dbReference type="GO" id="GO:0016020">
    <property type="term" value="C:membrane"/>
    <property type="evidence" value="ECO:0007669"/>
    <property type="project" value="UniProtKB-SubCell"/>
</dbReference>
<dbReference type="InterPro" id="IPR005178">
    <property type="entry name" value="Ostalpha/TMEM184C"/>
</dbReference>
<dbReference type="PANTHER" id="PTHR23423">
    <property type="entry name" value="ORGANIC SOLUTE TRANSPORTER-RELATED"/>
    <property type="match status" value="1"/>
</dbReference>
<dbReference type="Pfam" id="PF03619">
    <property type="entry name" value="Solute_trans_a"/>
    <property type="match status" value="1"/>
</dbReference>
<dbReference type="SMART" id="SM01417">
    <property type="entry name" value="Solute_trans_a"/>
    <property type="match status" value="1"/>
</dbReference>
<feature type="chain" id="PRO_0000211556" description="Transmembrane protein 184B">
    <location>
        <begin position="1"/>
        <end position="407"/>
    </location>
</feature>
<feature type="transmembrane region" description="Helical" evidence="3">
    <location>
        <begin position="40"/>
        <end position="60"/>
    </location>
</feature>
<feature type="transmembrane region" description="Helical" evidence="3">
    <location>
        <begin position="84"/>
        <end position="104"/>
    </location>
</feature>
<feature type="transmembrane region" description="Helical" evidence="3">
    <location>
        <begin position="121"/>
        <end position="141"/>
    </location>
</feature>
<feature type="transmembrane region" description="Helical" evidence="3">
    <location>
        <begin position="178"/>
        <end position="198"/>
    </location>
</feature>
<feature type="transmembrane region" description="Helical" evidence="3">
    <location>
        <begin position="214"/>
        <end position="234"/>
    </location>
</feature>
<feature type="transmembrane region" description="Helical" evidence="3">
    <location>
        <begin position="249"/>
        <end position="269"/>
    </location>
</feature>
<feature type="transmembrane region" description="Helical" evidence="3">
    <location>
        <begin position="290"/>
        <end position="310"/>
    </location>
</feature>
<feature type="region of interest" description="Disordered" evidence="4">
    <location>
        <begin position="1"/>
        <end position="31"/>
    </location>
</feature>
<feature type="region of interest" description="Disordered" evidence="4">
    <location>
        <begin position="369"/>
        <end position="395"/>
    </location>
</feature>
<feature type="compositionally biased region" description="Low complexity" evidence="4">
    <location>
        <begin position="1"/>
        <end position="28"/>
    </location>
</feature>
<feature type="modified residue" description="Phosphoserine" evidence="2">
    <location>
        <position position="388"/>
    </location>
</feature>
<feature type="modified residue" description="Phosphoserine" evidence="2">
    <location>
        <position position="402"/>
    </location>
</feature>
<feature type="modified residue" description="Phosphoserine" evidence="2">
    <location>
        <position position="403"/>
    </location>
</feature>
<feature type="sequence conflict" description="In Ref. 1; BAC33254." evidence="5" ref="1">
    <original>Q</original>
    <variation>QVLTYGPY</variation>
    <location>
        <position position="327"/>
    </location>
</feature>
<organism>
    <name type="scientific">Mus musculus</name>
    <name type="common">Mouse</name>
    <dbReference type="NCBI Taxonomy" id="10090"/>
    <lineage>
        <taxon>Eukaryota</taxon>
        <taxon>Metazoa</taxon>
        <taxon>Chordata</taxon>
        <taxon>Craniata</taxon>
        <taxon>Vertebrata</taxon>
        <taxon>Euteleostomi</taxon>
        <taxon>Mammalia</taxon>
        <taxon>Eutheria</taxon>
        <taxon>Euarchontoglires</taxon>
        <taxon>Glires</taxon>
        <taxon>Rodentia</taxon>
        <taxon>Myomorpha</taxon>
        <taxon>Muroidea</taxon>
        <taxon>Muridae</taxon>
        <taxon>Murinae</taxon>
        <taxon>Mus</taxon>
        <taxon>Mus</taxon>
    </lineage>
</organism>
<name>T184B_MOUSE</name>
<gene>
    <name type="primary">Tmem184b</name>
</gene>
<evidence type="ECO:0000250" key="1"/>
<evidence type="ECO:0000250" key="2">
    <source>
        <dbReference type="UniProtKB" id="Q9Y519"/>
    </source>
</evidence>
<evidence type="ECO:0000255" key="3"/>
<evidence type="ECO:0000256" key="4">
    <source>
        <dbReference type="SAM" id="MobiDB-lite"/>
    </source>
</evidence>
<evidence type="ECO:0000305" key="5"/>
<keyword id="KW-0472">Membrane</keyword>
<keyword id="KW-0597">Phosphoprotein</keyword>
<keyword id="KW-1185">Reference proteome</keyword>
<keyword id="KW-0812">Transmembrane</keyword>
<keyword id="KW-1133">Transmembrane helix</keyword>